<accession>B0XQ15</accession>
<protein>
    <recommendedName>
        <fullName evidence="1">Probable cytosolic iron-sulfur protein assembly protein 1</fullName>
    </recommendedName>
</protein>
<comment type="function">
    <text evidence="1">Essential component of the cytosolic iron-sulfur (Fe/S) protein assembly machinery. Required for the maturation of extramitochondrial Fe/S proteins.</text>
</comment>
<comment type="similarity">
    <text evidence="1">Belongs to the WD repeat CIA1 family.</text>
</comment>
<sequence>MVMAAEASSQLSLLSDLTPPSLERTWLTAPHPTLPIVATCSSDKTVRVYSLTNFRLLSTISGGHKRSVRTCAWKPHVKGESVLATGSFDATVGIWRRWDSYGQTERGIEDWRHADSHDHVDGMGAAGINNGGGDSADEDDEEWRFAVLLDGHDSEVKSVSWSPSGMLLATCSRDKSIWIWEDLDDGDNNFETVAVMQEHQGDVKCVAWHPVEECLASASYDDTIRLWREDLDDWGQVACIKGHQGTVWCVDWEGAENVPSAPTDLADDDPVTAQWKKAHALSGPRLVSCSDDRTVRIWRRQPKEQHQHQAQPSPSGGSGIPSIIRPTGSDEFWDEECVLPQAHDLSIYTVAWSKRTGLIASVGADGRVVVYEERFIVGSTAEAMETDHPTSADGTAADSPAALRTEWRVIATVDGAHGIYEINHVTWAKRADRGRIEGTDEEVLITTADDGTVRVWTLKM</sequence>
<dbReference type="EMBL" id="DS499594">
    <property type="protein sequence ID" value="EDP56129.1"/>
    <property type="molecule type" value="Genomic_DNA"/>
</dbReference>
<dbReference type="SMR" id="B0XQ15"/>
<dbReference type="EnsemblFungi" id="EDP56129">
    <property type="protein sequence ID" value="EDP56129"/>
    <property type="gene ID" value="AFUB_008350"/>
</dbReference>
<dbReference type="VEuPathDB" id="FungiDB:AFUB_008350"/>
<dbReference type="HOGENOM" id="CLU_000288_57_8_1"/>
<dbReference type="OrthoDB" id="52327at5052"/>
<dbReference type="PhylomeDB" id="B0XQ15"/>
<dbReference type="Proteomes" id="UP000001699">
    <property type="component" value="Unassembled WGS sequence"/>
</dbReference>
<dbReference type="GO" id="GO:0097361">
    <property type="term" value="C:cytosolic [4Fe-4S] assembly targeting complex"/>
    <property type="evidence" value="ECO:0007669"/>
    <property type="project" value="InterPro"/>
</dbReference>
<dbReference type="GO" id="GO:0016226">
    <property type="term" value="P:iron-sulfur cluster assembly"/>
    <property type="evidence" value="ECO:0007669"/>
    <property type="project" value="UniProtKB-UniRule"/>
</dbReference>
<dbReference type="Gene3D" id="2.130.10.10">
    <property type="entry name" value="YVTN repeat-like/Quinoprotein amine dehydrogenase"/>
    <property type="match status" value="1"/>
</dbReference>
<dbReference type="HAMAP" id="MF_03037">
    <property type="entry name" value="ciao1"/>
    <property type="match status" value="1"/>
</dbReference>
<dbReference type="InterPro" id="IPR028608">
    <property type="entry name" value="CIAO1/Cia1"/>
</dbReference>
<dbReference type="InterPro" id="IPR020472">
    <property type="entry name" value="G-protein_beta_WD-40_rep"/>
</dbReference>
<dbReference type="InterPro" id="IPR015943">
    <property type="entry name" value="WD40/YVTN_repeat-like_dom_sf"/>
</dbReference>
<dbReference type="InterPro" id="IPR036322">
    <property type="entry name" value="WD40_repeat_dom_sf"/>
</dbReference>
<dbReference type="InterPro" id="IPR001680">
    <property type="entry name" value="WD40_rpt"/>
</dbReference>
<dbReference type="PANTHER" id="PTHR19920:SF0">
    <property type="entry name" value="CYTOSOLIC IRON-SULFUR PROTEIN ASSEMBLY PROTEIN CIAO1-RELATED"/>
    <property type="match status" value="1"/>
</dbReference>
<dbReference type="PANTHER" id="PTHR19920">
    <property type="entry name" value="WD40 PROTEIN CIAO1"/>
    <property type="match status" value="1"/>
</dbReference>
<dbReference type="Pfam" id="PF00400">
    <property type="entry name" value="WD40"/>
    <property type="match status" value="6"/>
</dbReference>
<dbReference type="PRINTS" id="PR00320">
    <property type="entry name" value="GPROTEINBRPT"/>
</dbReference>
<dbReference type="SMART" id="SM00320">
    <property type="entry name" value="WD40"/>
    <property type="match status" value="7"/>
</dbReference>
<dbReference type="SUPFAM" id="SSF50978">
    <property type="entry name" value="WD40 repeat-like"/>
    <property type="match status" value="1"/>
</dbReference>
<dbReference type="PROSITE" id="PS50082">
    <property type="entry name" value="WD_REPEATS_2"/>
    <property type="match status" value="4"/>
</dbReference>
<dbReference type="PROSITE" id="PS50294">
    <property type="entry name" value="WD_REPEATS_REGION"/>
    <property type="match status" value="2"/>
</dbReference>
<reference key="1">
    <citation type="journal article" date="2008" name="PLoS Genet.">
        <title>Genomic islands in the pathogenic filamentous fungus Aspergillus fumigatus.</title>
        <authorList>
            <person name="Fedorova N.D."/>
            <person name="Khaldi N."/>
            <person name="Joardar V.S."/>
            <person name="Maiti R."/>
            <person name="Amedeo P."/>
            <person name="Anderson M.J."/>
            <person name="Crabtree J."/>
            <person name="Silva J.C."/>
            <person name="Badger J.H."/>
            <person name="Albarraq A."/>
            <person name="Angiuoli S."/>
            <person name="Bussey H."/>
            <person name="Bowyer P."/>
            <person name="Cotty P.J."/>
            <person name="Dyer P.S."/>
            <person name="Egan A."/>
            <person name="Galens K."/>
            <person name="Fraser-Liggett C.M."/>
            <person name="Haas B.J."/>
            <person name="Inman J.M."/>
            <person name="Kent R."/>
            <person name="Lemieux S."/>
            <person name="Malavazi I."/>
            <person name="Orvis J."/>
            <person name="Roemer T."/>
            <person name="Ronning C.M."/>
            <person name="Sundaram J.P."/>
            <person name="Sutton G."/>
            <person name="Turner G."/>
            <person name="Venter J.C."/>
            <person name="White O.R."/>
            <person name="Whitty B.R."/>
            <person name="Youngman P."/>
            <person name="Wolfe K.H."/>
            <person name="Goldman G.H."/>
            <person name="Wortman J.R."/>
            <person name="Jiang B."/>
            <person name="Denning D.W."/>
            <person name="Nierman W.C."/>
        </authorList>
    </citation>
    <scope>NUCLEOTIDE SEQUENCE [LARGE SCALE GENOMIC DNA]</scope>
    <source>
        <strain>CBS 144.89 / FGSC A1163 / CEA10</strain>
    </source>
</reference>
<evidence type="ECO:0000255" key="1">
    <source>
        <dbReference type="HAMAP-Rule" id="MF_03037"/>
    </source>
</evidence>
<evidence type="ECO:0000256" key="2">
    <source>
        <dbReference type="SAM" id="MobiDB-lite"/>
    </source>
</evidence>
<gene>
    <name type="primary">cia1</name>
    <name type="ORF">AFUB_008350</name>
</gene>
<name>CIAO1_ASPFC</name>
<feature type="chain" id="PRO_0000382501" description="Probable cytosolic iron-sulfur protein assembly protein 1">
    <location>
        <begin position="1"/>
        <end position="460"/>
    </location>
</feature>
<feature type="repeat" description="WD 1">
    <location>
        <begin position="17"/>
        <end position="59"/>
    </location>
</feature>
<feature type="repeat" description="WD 2">
    <location>
        <begin position="63"/>
        <end position="105"/>
    </location>
</feature>
<feature type="repeat" description="WD 3">
    <location>
        <begin position="151"/>
        <end position="190"/>
    </location>
</feature>
<feature type="repeat" description="WD 4">
    <location>
        <begin position="198"/>
        <end position="237"/>
    </location>
</feature>
<feature type="repeat" description="WD 5">
    <location>
        <begin position="242"/>
        <end position="308"/>
    </location>
</feature>
<feature type="repeat" description="WD 6">
    <location>
        <begin position="342"/>
        <end position="381"/>
    </location>
</feature>
<feature type="repeat" description="WD 7">
    <location>
        <begin position="416"/>
        <end position="457"/>
    </location>
</feature>
<feature type="region of interest" description="Disordered" evidence="2">
    <location>
        <begin position="301"/>
        <end position="325"/>
    </location>
</feature>
<feature type="compositionally biased region" description="Low complexity" evidence="2">
    <location>
        <begin position="312"/>
        <end position="324"/>
    </location>
</feature>
<proteinExistence type="inferred from homology"/>
<keyword id="KW-0677">Repeat</keyword>
<keyword id="KW-0853">WD repeat</keyword>
<organism>
    <name type="scientific">Aspergillus fumigatus (strain CBS 144.89 / FGSC A1163 / CEA10)</name>
    <name type="common">Neosartorya fumigata</name>
    <dbReference type="NCBI Taxonomy" id="451804"/>
    <lineage>
        <taxon>Eukaryota</taxon>
        <taxon>Fungi</taxon>
        <taxon>Dikarya</taxon>
        <taxon>Ascomycota</taxon>
        <taxon>Pezizomycotina</taxon>
        <taxon>Eurotiomycetes</taxon>
        <taxon>Eurotiomycetidae</taxon>
        <taxon>Eurotiales</taxon>
        <taxon>Aspergillaceae</taxon>
        <taxon>Aspergillus</taxon>
        <taxon>Aspergillus subgen. Fumigati</taxon>
    </lineage>
</organism>